<dbReference type="EMBL" id="AB006443">
    <property type="protein sequence ID" value="BAA25304.1"/>
    <property type="molecule type" value="mRNA"/>
</dbReference>
<dbReference type="RefSeq" id="NP_001166384.1">
    <property type="nucleotide sequence ID" value="NM_001172913.1"/>
</dbReference>
<dbReference type="SMR" id="O70159"/>
<dbReference type="FunCoup" id="O70159">
    <property type="interactions" value="246"/>
</dbReference>
<dbReference type="STRING" id="10141.ENSCPOP00000000953"/>
<dbReference type="MEROPS" id="I25.020"/>
<dbReference type="MEROPS" id="I25.021"/>
<dbReference type="GlyCosmos" id="O70159">
    <property type="glycosylation" value="3 sites, No reported glycans"/>
</dbReference>
<dbReference type="Ensembl" id="ENSCPOT00000001067.3">
    <property type="protein sequence ID" value="ENSCPOP00000000953.2"/>
    <property type="gene ID" value="ENSCPOG00000001057.4"/>
</dbReference>
<dbReference type="GeneID" id="100135479"/>
<dbReference type="KEGG" id="cpoc:100135479"/>
<dbReference type="CTD" id="197"/>
<dbReference type="VEuPathDB" id="HostDB:ENSCPOG00000001057"/>
<dbReference type="eggNOG" id="ENOG502RYRI">
    <property type="taxonomic scope" value="Eukaryota"/>
</dbReference>
<dbReference type="GeneTree" id="ENSGT00950000182930"/>
<dbReference type="HOGENOM" id="CLU_052519_0_0_1"/>
<dbReference type="InParanoid" id="O70159"/>
<dbReference type="OMA" id="KVWPRQP"/>
<dbReference type="OrthoDB" id="8780871at2759"/>
<dbReference type="TreeFam" id="TF333729"/>
<dbReference type="Proteomes" id="UP000005447">
    <property type="component" value="Unassembled WGS sequence"/>
</dbReference>
<dbReference type="Bgee" id="ENSCPOG00000001057">
    <property type="expression patterns" value="Expressed in liver and 6 other cell types or tissues"/>
</dbReference>
<dbReference type="GO" id="GO:0072562">
    <property type="term" value="C:blood microparticle"/>
    <property type="evidence" value="ECO:0007669"/>
    <property type="project" value="TreeGrafter"/>
</dbReference>
<dbReference type="GO" id="GO:0031012">
    <property type="term" value="C:extracellular matrix"/>
    <property type="evidence" value="ECO:0007669"/>
    <property type="project" value="TreeGrafter"/>
</dbReference>
<dbReference type="GO" id="GO:0005794">
    <property type="term" value="C:Golgi apparatus"/>
    <property type="evidence" value="ECO:0007669"/>
    <property type="project" value="Ensembl"/>
</dbReference>
<dbReference type="GO" id="GO:0004869">
    <property type="term" value="F:cysteine-type endopeptidase inhibitor activity"/>
    <property type="evidence" value="ECO:0007669"/>
    <property type="project" value="InterPro"/>
</dbReference>
<dbReference type="GO" id="GO:0006953">
    <property type="term" value="P:acute-phase response"/>
    <property type="evidence" value="ECO:0000250"/>
    <property type="project" value="UniProtKB"/>
</dbReference>
<dbReference type="GO" id="GO:0030502">
    <property type="term" value="P:negative regulation of bone mineralization"/>
    <property type="evidence" value="ECO:0000250"/>
    <property type="project" value="UniProtKB"/>
</dbReference>
<dbReference type="GO" id="GO:0001503">
    <property type="term" value="P:ossification"/>
    <property type="evidence" value="ECO:0007669"/>
    <property type="project" value="Ensembl"/>
</dbReference>
<dbReference type="GO" id="GO:0050766">
    <property type="term" value="P:positive regulation of phagocytosis"/>
    <property type="evidence" value="ECO:0000250"/>
    <property type="project" value="UniProtKB"/>
</dbReference>
<dbReference type="GO" id="GO:0050727">
    <property type="term" value="P:regulation of inflammatory response"/>
    <property type="evidence" value="ECO:0000250"/>
    <property type="project" value="UniProtKB"/>
</dbReference>
<dbReference type="CDD" id="cd00042">
    <property type="entry name" value="CY"/>
    <property type="match status" value="2"/>
</dbReference>
<dbReference type="FunFam" id="3.10.450.10:FF:000010">
    <property type="entry name" value="Alpha-2-HS-glycoprotein"/>
    <property type="match status" value="1"/>
</dbReference>
<dbReference type="FunFam" id="3.10.450.10:FF:000009">
    <property type="entry name" value="Alpha-2-HS-glycoprotein 2"/>
    <property type="match status" value="1"/>
</dbReference>
<dbReference type="Gene3D" id="3.10.450.10">
    <property type="match status" value="2"/>
</dbReference>
<dbReference type="InterPro" id="IPR000010">
    <property type="entry name" value="Cystatin_dom"/>
</dbReference>
<dbReference type="InterPro" id="IPR025760">
    <property type="entry name" value="Cystatin_Fetuin_A"/>
</dbReference>
<dbReference type="InterPro" id="IPR046350">
    <property type="entry name" value="Cystatin_sf"/>
</dbReference>
<dbReference type="InterPro" id="IPR050735">
    <property type="entry name" value="Kininogen_Fetuin_HRG"/>
</dbReference>
<dbReference type="InterPro" id="IPR001363">
    <property type="entry name" value="Prot_inh_fetuin_CS"/>
</dbReference>
<dbReference type="PANTHER" id="PTHR13814:SF6">
    <property type="entry name" value="ALPHA-2-HS-GLYCOPROTEIN"/>
    <property type="match status" value="1"/>
</dbReference>
<dbReference type="PANTHER" id="PTHR13814">
    <property type="entry name" value="FETUIN"/>
    <property type="match status" value="1"/>
</dbReference>
<dbReference type="Pfam" id="PF00031">
    <property type="entry name" value="Cystatin"/>
    <property type="match status" value="1"/>
</dbReference>
<dbReference type="SMART" id="SM00043">
    <property type="entry name" value="CY"/>
    <property type="match status" value="2"/>
</dbReference>
<dbReference type="SUPFAM" id="SSF54403">
    <property type="entry name" value="Cystatin/monellin"/>
    <property type="match status" value="2"/>
</dbReference>
<dbReference type="PROSITE" id="PS51529">
    <property type="entry name" value="CYSTATIN_FETUIN_A"/>
    <property type="match status" value="2"/>
</dbReference>
<dbReference type="PROSITE" id="PS01254">
    <property type="entry name" value="FETUIN_1"/>
    <property type="match status" value="1"/>
</dbReference>
<dbReference type="PROSITE" id="PS01255">
    <property type="entry name" value="FETUIN_2"/>
    <property type="match status" value="1"/>
</dbReference>
<sequence>MKFFVLFLCLVQLWGCHSTPVVLGLEERNPACDDPETEAAALAGVDYLNQHVRWGYKHVLNQIDKVRVWPRRPSGEVYELEFDTLETTCHALDITPLANCSVRTVTQHAVEGDCDMHVLKQDGQFSVVFAKCESTPDSREDVRKVCPQCPLLTPVNNTKVVHAANAALAAFNAQNNGSHFELLEISRAQLVPLPVSTYVEFAVVATDCAAADGTDPACSGPPKKQYGFCKATVAEKLGGEEVSVTCTVFPTQPVAPLPQPDAASSANPPPAADPAVSPPSSPSVPVDSVALGPKRVLLPPPVHREHYNLRYSFPDVDSASGEAFGPRQKPKVTHPGVASGVGPVPPPPCPGRIRHFKI</sequence>
<keyword id="KW-1015">Disulfide bond</keyword>
<keyword id="KW-0325">Glycoprotein</keyword>
<keyword id="KW-0597">Phosphoprotein</keyword>
<keyword id="KW-0646">Protease inhibitor</keyword>
<keyword id="KW-1185">Reference proteome</keyword>
<keyword id="KW-0677">Repeat</keyword>
<keyword id="KW-0964">Secreted</keyword>
<keyword id="KW-0732">Signal</keyword>
<accession>O70159</accession>
<organism>
    <name type="scientific">Cavia porcellus</name>
    <name type="common">Guinea pig</name>
    <dbReference type="NCBI Taxonomy" id="10141"/>
    <lineage>
        <taxon>Eukaryota</taxon>
        <taxon>Metazoa</taxon>
        <taxon>Chordata</taxon>
        <taxon>Craniata</taxon>
        <taxon>Vertebrata</taxon>
        <taxon>Euteleostomi</taxon>
        <taxon>Mammalia</taxon>
        <taxon>Eutheria</taxon>
        <taxon>Euarchontoglires</taxon>
        <taxon>Glires</taxon>
        <taxon>Rodentia</taxon>
        <taxon>Hystricomorpha</taxon>
        <taxon>Caviidae</taxon>
        <taxon>Cavia</taxon>
    </lineage>
</organism>
<protein>
    <recommendedName>
        <fullName>Alpha-2-HS-glycoprotein</fullName>
    </recommendedName>
    <alternativeName>
        <fullName>Fetuin-A</fullName>
    </alternativeName>
</protein>
<comment type="subcellular location">
    <subcellularLocation>
        <location evidence="1">Secreted</location>
    </subcellularLocation>
</comment>
<comment type="tissue specificity">
    <text>Bone marrow.</text>
</comment>
<comment type="PTM">
    <text evidence="2">Phosphorylated by FAM20C in the extracellular medium.</text>
</comment>
<comment type="similarity">
    <text evidence="5">Belongs to the fetuin family.</text>
</comment>
<evidence type="ECO:0000250" key="1"/>
<evidence type="ECO:0000250" key="2">
    <source>
        <dbReference type="UniProtKB" id="P02765"/>
    </source>
</evidence>
<evidence type="ECO:0000250" key="3">
    <source>
        <dbReference type="UniProtKB" id="P29699"/>
    </source>
</evidence>
<evidence type="ECO:0000255" key="4"/>
<evidence type="ECO:0000255" key="5">
    <source>
        <dbReference type="PROSITE-ProRule" id="PRU00861"/>
    </source>
</evidence>
<evidence type="ECO:0000256" key="6">
    <source>
        <dbReference type="SAM" id="MobiDB-lite"/>
    </source>
</evidence>
<gene>
    <name type="primary">AHSG</name>
    <name type="synonym">FETUA</name>
</gene>
<name>FETUA_CAVPO</name>
<reference key="1">
    <citation type="journal article" date="1999" name="Biol. Chem.">
        <title>cDNA sequencing of guinea pig alpha 2-HS glycoprotein, its expression in various tissues and acute phase expression.</title>
        <authorList>
            <person name="Yoshida K."/>
            <person name="Suzuki Y."/>
            <person name="Yamamoto K."/>
            <person name="Sinohara H."/>
        </authorList>
    </citation>
    <scope>NUCLEOTIDE SEQUENCE [MRNA]</scope>
    <source>
        <strain>Hartley</strain>
        <tissue>Liver</tissue>
    </source>
</reference>
<proteinExistence type="evidence at transcript level"/>
<feature type="signal peptide" evidence="1">
    <location>
        <begin position="1"/>
        <end position="18"/>
    </location>
</feature>
<feature type="chain" id="PRO_0000008886" description="Alpha-2-HS-glycoprotein">
    <location>
        <begin position="19"/>
        <end position="358"/>
    </location>
</feature>
<feature type="domain" description="Cystatin fetuin-A-type 1" evidence="5">
    <location>
        <begin position="27"/>
        <end position="133"/>
    </location>
</feature>
<feature type="domain" description="Cystatin fetuin-A-type 2" evidence="5">
    <location>
        <begin position="144"/>
        <end position="254"/>
    </location>
</feature>
<feature type="region of interest" description="Disordered" evidence="6">
    <location>
        <begin position="257"/>
        <end position="288"/>
    </location>
</feature>
<feature type="region of interest" description="Disordered" evidence="6">
    <location>
        <begin position="320"/>
        <end position="350"/>
    </location>
</feature>
<feature type="compositionally biased region" description="Pro residues" evidence="6">
    <location>
        <begin position="267"/>
        <end position="282"/>
    </location>
</feature>
<feature type="modified residue" description="Phosphoserine" evidence="2">
    <location>
        <position position="134"/>
    </location>
</feature>
<feature type="modified residue" description="Phosphothreonine" evidence="3">
    <location>
        <position position="135"/>
    </location>
</feature>
<feature type="modified residue" description="Phosphoserine" evidence="2">
    <location>
        <position position="138"/>
    </location>
</feature>
<feature type="modified residue" description="Phosphoserine" evidence="2">
    <location>
        <position position="318"/>
    </location>
</feature>
<feature type="modified residue" description="Phosphoserine" evidence="2">
    <location>
        <position position="320"/>
    </location>
</feature>
<feature type="glycosylation site" description="N-linked (GlcNAc...) asparagine" evidence="4">
    <location>
        <position position="99"/>
    </location>
</feature>
<feature type="glycosylation site" description="N-linked (GlcNAc...) asparagine" evidence="4">
    <location>
        <position position="156"/>
    </location>
</feature>
<feature type="glycosylation site" description="N-linked (GlcNAc...) asparagine" evidence="4">
    <location>
        <position position="176"/>
    </location>
</feature>
<feature type="disulfide bond" evidence="5">
    <location>
        <begin position="32"/>
        <end position="349"/>
    </location>
</feature>
<feature type="disulfide bond" evidence="5">
    <location>
        <begin position="89"/>
        <end position="100"/>
    </location>
</feature>
<feature type="disulfide bond" evidence="5">
    <location>
        <begin position="114"/>
        <end position="132"/>
    </location>
</feature>
<feature type="disulfide bond" evidence="5">
    <location>
        <begin position="146"/>
        <end position="149"/>
    </location>
</feature>
<feature type="disulfide bond" evidence="5">
    <location>
        <begin position="208"/>
        <end position="218"/>
    </location>
</feature>
<feature type="disulfide bond" evidence="5">
    <location>
        <begin position="229"/>
        <end position="246"/>
    </location>
</feature>